<protein>
    <recommendedName>
        <fullName>Uncharacterized protein aq_2175</fullName>
    </recommendedName>
</protein>
<gene>
    <name type="ordered locus">aq_2175</name>
</gene>
<sequence>MKKMKKLLLLLSASFAFSLQMDFKEVKKFPYIKYVTAWKGTPAETKDVAVPNVYIVVGQKESPEVLTSAAKVAFYLGQWTDGIGLSPKLVKEGKIPKLIISDKEVEKYKDRNLIVIGTNNEIVRELGLKFKEPTLKVVEKDGRKILIVGGKDTKEVVKAASFLADRVISFKVGAYNTFFNWVRVRGMIEHGNYEGAYDMLTDSRGVHACGRNMSLAAPMMAKFPPEVKKVVKKRNKIMYVELPKALKEENKEKAKKLWREAMITCFQCHHGIGIPKMRKFEPLADIHSKHQRIANKYGLSCKDCHYGITEYRGYEEGTTEQ</sequence>
<dbReference type="EMBL" id="AE000657">
    <property type="protein sequence ID" value="AAC07892.1"/>
    <property type="molecule type" value="Genomic_DNA"/>
</dbReference>
<dbReference type="PIR" id="H70486">
    <property type="entry name" value="H70486"/>
</dbReference>
<dbReference type="RefSeq" id="NP_214493.1">
    <property type="nucleotide sequence ID" value="NC_000918.1"/>
</dbReference>
<dbReference type="SMR" id="O67924"/>
<dbReference type="STRING" id="224324.aq_2175"/>
<dbReference type="EnsemblBacteria" id="AAC07892">
    <property type="protein sequence ID" value="AAC07892"/>
    <property type="gene ID" value="aq_2175"/>
</dbReference>
<dbReference type="KEGG" id="aae:aq_2175"/>
<dbReference type="eggNOG" id="ENOG5033TWY">
    <property type="taxonomic scope" value="Bacteria"/>
</dbReference>
<dbReference type="HOGENOM" id="CLU_876270_0_0_0"/>
<dbReference type="InParanoid" id="O67924"/>
<dbReference type="OrthoDB" id="10610at2"/>
<dbReference type="Proteomes" id="UP000000798">
    <property type="component" value="Chromosome"/>
</dbReference>
<dbReference type="GO" id="GO:0016020">
    <property type="term" value="C:membrane"/>
    <property type="evidence" value="ECO:0007669"/>
    <property type="project" value="InterPro"/>
</dbReference>
<dbReference type="GO" id="GO:0006011">
    <property type="term" value="P:UDP-alpha-D-glucose metabolic process"/>
    <property type="evidence" value="ECO:0007669"/>
    <property type="project" value="InterPro"/>
</dbReference>
<dbReference type="InterPro" id="IPR018513">
    <property type="entry name" value="Cell_synthase_bac"/>
</dbReference>
<dbReference type="InterPro" id="IPR036280">
    <property type="entry name" value="Multihaem_cyt_sf"/>
</dbReference>
<dbReference type="Pfam" id="PF03170">
    <property type="entry name" value="BcsB"/>
    <property type="match status" value="1"/>
</dbReference>
<dbReference type="SUPFAM" id="SSF48695">
    <property type="entry name" value="Multiheme cytochromes"/>
    <property type="match status" value="1"/>
</dbReference>
<reference key="1">
    <citation type="journal article" date="1998" name="Nature">
        <title>The complete genome of the hyperthermophilic bacterium Aquifex aeolicus.</title>
        <authorList>
            <person name="Deckert G."/>
            <person name="Warren P.V."/>
            <person name="Gaasterland T."/>
            <person name="Young W.G."/>
            <person name="Lenox A.L."/>
            <person name="Graham D.E."/>
            <person name="Overbeek R."/>
            <person name="Snead M.A."/>
            <person name="Keller M."/>
            <person name="Aujay M."/>
            <person name="Huber R."/>
            <person name="Feldman R.A."/>
            <person name="Short J.M."/>
            <person name="Olsen G.J."/>
            <person name="Swanson R.V."/>
        </authorList>
    </citation>
    <scope>NUCLEOTIDE SEQUENCE [LARGE SCALE GENOMIC DNA]</scope>
    <source>
        <strain>VF5</strain>
    </source>
</reference>
<keyword id="KW-1185">Reference proteome</keyword>
<keyword id="KW-0732">Signal</keyword>
<name>Y2175_AQUAE</name>
<organism>
    <name type="scientific">Aquifex aeolicus (strain VF5)</name>
    <dbReference type="NCBI Taxonomy" id="224324"/>
    <lineage>
        <taxon>Bacteria</taxon>
        <taxon>Pseudomonadati</taxon>
        <taxon>Aquificota</taxon>
        <taxon>Aquificia</taxon>
        <taxon>Aquificales</taxon>
        <taxon>Aquificaceae</taxon>
        <taxon>Aquifex</taxon>
    </lineage>
</organism>
<evidence type="ECO:0000255" key="1"/>
<feature type="signal peptide" evidence="1">
    <location>
        <begin position="1"/>
        <end position="18"/>
    </location>
</feature>
<feature type="chain" id="PRO_0000013631" description="Uncharacterized protein aq_2175">
    <location>
        <begin position="19"/>
        <end position="321"/>
    </location>
</feature>
<proteinExistence type="inferred from homology"/>
<accession>O67924</accession>